<evidence type="ECO:0000255" key="1">
    <source>
        <dbReference type="HAMAP-Rule" id="MF_01333"/>
    </source>
</evidence>
<evidence type="ECO:0000305" key="2"/>
<sequence length="179" mass="20298">MAKLHDYYKDEVVKKLMTEFSYNSVMQVPRVEKITLNMGVGEAIADKKLLDNAAADLAAISGQKPFITKARKSVAGFKIRQGYPIGCKVTLRGERMWEFFERLISIAVPRIRDFRGLSAKSFDGRGNYSMGVREQIIFPEIDYDKVDRVRGMDITITTTAKSDDEGRALLAAFNFPFRK</sequence>
<organism>
    <name type="scientific">Erwinia tasmaniensis (strain DSM 17950 / CFBP 7177 / CIP 109463 / NCPPB 4357 / Et1/99)</name>
    <dbReference type="NCBI Taxonomy" id="465817"/>
    <lineage>
        <taxon>Bacteria</taxon>
        <taxon>Pseudomonadati</taxon>
        <taxon>Pseudomonadota</taxon>
        <taxon>Gammaproteobacteria</taxon>
        <taxon>Enterobacterales</taxon>
        <taxon>Erwiniaceae</taxon>
        <taxon>Erwinia</taxon>
    </lineage>
</organism>
<comment type="function">
    <text evidence="1">This is one of the proteins that bind and probably mediate the attachment of the 5S RNA into the large ribosomal subunit, where it forms part of the central protuberance. In the 70S ribosome it contacts protein S13 of the 30S subunit (bridge B1b), connecting the 2 subunits; this bridge is implicated in subunit movement. Contacts the P site tRNA; the 5S rRNA and some of its associated proteins might help stabilize positioning of ribosome-bound tRNAs.</text>
</comment>
<comment type="subunit">
    <text evidence="1">Part of the 50S ribosomal subunit; part of the 5S rRNA/L5/L18/L25 subcomplex. Contacts the 5S rRNA and the P site tRNA. Forms a bridge to the 30S subunit in the 70S ribosome.</text>
</comment>
<comment type="similarity">
    <text evidence="1">Belongs to the universal ribosomal protein uL5 family.</text>
</comment>
<dbReference type="EMBL" id="CU468135">
    <property type="protein sequence ID" value="CAO98197.1"/>
    <property type="molecule type" value="Genomic_DNA"/>
</dbReference>
<dbReference type="RefSeq" id="WP_004160580.1">
    <property type="nucleotide sequence ID" value="NC_010694.1"/>
</dbReference>
<dbReference type="SMR" id="B2VK52"/>
<dbReference type="STRING" id="465817.ETA_31510"/>
<dbReference type="GeneID" id="97604576"/>
<dbReference type="KEGG" id="eta:ETA_31510"/>
<dbReference type="eggNOG" id="COG0094">
    <property type="taxonomic scope" value="Bacteria"/>
</dbReference>
<dbReference type="HOGENOM" id="CLU_061015_2_1_6"/>
<dbReference type="OrthoDB" id="9806626at2"/>
<dbReference type="Proteomes" id="UP000001726">
    <property type="component" value="Chromosome"/>
</dbReference>
<dbReference type="GO" id="GO:1990904">
    <property type="term" value="C:ribonucleoprotein complex"/>
    <property type="evidence" value="ECO:0007669"/>
    <property type="project" value="UniProtKB-KW"/>
</dbReference>
<dbReference type="GO" id="GO:0005840">
    <property type="term" value="C:ribosome"/>
    <property type="evidence" value="ECO:0007669"/>
    <property type="project" value="UniProtKB-KW"/>
</dbReference>
<dbReference type="GO" id="GO:0019843">
    <property type="term" value="F:rRNA binding"/>
    <property type="evidence" value="ECO:0007669"/>
    <property type="project" value="UniProtKB-UniRule"/>
</dbReference>
<dbReference type="GO" id="GO:0003735">
    <property type="term" value="F:structural constituent of ribosome"/>
    <property type="evidence" value="ECO:0007669"/>
    <property type="project" value="InterPro"/>
</dbReference>
<dbReference type="GO" id="GO:0000049">
    <property type="term" value="F:tRNA binding"/>
    <property type="evidence" value="ECO:0007669"/>
    <property type="project" value="UniProtKB-UniRule"/>
</dbReference>
<dbReference type="GO" id="GO:0006412">
    <property type="term" value="P:translation"/>
    <property type="evidence" value="ECO:0007669"/>
    <property type="project" value="UniProtKB-UniRule"/>
</dbReference>
<dbReference type="FunFam" id="3.30.1440.10:FF:000001">
    <property type="entry name" value="50S ribosomal protein L5"/>
    <property type="match status" value="1"/>
</dbReference>
<dbReference type="Gene3D" id="3.30.1440.10">
    <property type="match status" value="1"/>
</dbReference>
<dbReference type="HAMAP" id="MF_01333_B">
    <property type="entry name" value="Ribosomal_uL5_B"/>
    <property type="match status" value="1"/>
</dbReference>
<dbReference type="InterPro" id="IPR002132">
    <property type="entry name" value="Ribosomal_uL5"/>
</dbReference>
<dbReference type="InterPro" id="IPR020930">
    <property type="entry name" value="Ribosomal_uL5_bac-type"/>
</dbReference>
<dbReference type="InterPro" id="IPR031309">
    <property type="entry name" value="Ribosomal_uL5_C"/>
</dbReference>
<dbReference type="InterPro" id="IPR022803">
    <property type="entry name" value="Ribosomal_uL5_dom_sf"/>
</dbReference>
<dbReference type="InterPro" id="IPR031310">
    <property type="entry name" value="Ribosomal_uL5_N"/>
</dbReference>
<dbReference type="NCBIfam" id="NF000585">
    <property type="entry name" value="PRK00010.1"/>
    <property type="match status" value="1"/>
</dbReference>
<dbReference type="PANTHER" id="PTHR11994">
    <property type="entry name" value="60S RIBOSOMAL PROTEIN L11-RELATED"/>
    <property type="match status" value="1"/>
</dbReference>
<dbReference type="Pfam" id="PF00281">
    <property type="entry name" value="Ribosomal_L5"/>
    <property type="match status" value="1"/>
</dbReference>
<dbReference type="Pfam" id="PF00673">
    <property type="entry name" value="Ribosomal_L5_C"/>
    <property type="match status" value="1"/>
</dbReference>
<dbReference type="PIRSF" id="PIRSF002161">
    <property type="entry name" value="Ribosomal_L5"/>
    <property type="match status" value="1"/>
</dbReference>
<dbReference type="SUPFAM" id="SSF55282">
    <property type="entry name" value="RL5-like"/>
    <property type="match status" value="1"/>
</dbReference>
<accession>B2VK52</accession>
<gene>
    <name evidence="1" type="primary">rplE</name>
    <name type="ordered locus">ETA_31510</name>
</gene>
<protein>
    <recommendedName>
        <fullName evidence="1">Large ribosomal subunit protein uL5</fullName>
    </recommendedName>
    <alternativeName>
        <fullName evidence="2">50S ribosomal protein L5</fullName>
    </alternativeName>
</protein>
<name>RL5_ERWT9</name>
<proteinExistence type="inferred from homology"/>
<reference key="1">
    <citation type="journal article" date="2008" name="Environ. Microbiol.">
        <title>The genome of Erwinia tasmaniensis strain Et1/99, a non-pathogenic bacterium in the genus Erwinia.</title>
        <authorList>
            <person name="Kube M."/>
            <person name="Migdoll A.M."/>
            <person name="Mueller I."/>
            <person name="Kuhl H."/>
            <person name="Beck A."/>
            <person name="Reinhardt R."/>
            <person name="Geider K."/>
        </authorList>
    </citation>
    <scope>NUCLEOTIDE SEQUENCE [LARGE SCALE GENOMIC DNA]</scope>
    <source>
        <strain>DSM 17950 / CFBP 7177 / CIP 109463 / NCPPB 4357 / Et1/99</strain>
    </source>
</reference>
<keyword id="KW-1185">Reference proteome</keyword>
<keyword id="KW-0687">Ribonucleoprotein</keyword>
<keyword id="KW-0689">Ribosomal protein</keyword>
<keyword id="KW-0694">RNA-binding</keyword>
<keyword id="KW-0699">rRNA-binding</keyword>
<keyword id="KW-0820">tRNA-binding</keyword>
<feature type="chain" id="PRO_1000142401" description="Large ribosomal subunit protein uL5">
    <location>
        <begin position="1"/>
        <end position="179"/>
    </location>
</feature>